<keyword id="KW-0325">Glycoprotein</keyword>
<keyword id="KW-0472">Membrane</keyword>
<keyword id="KW-1185">Reference proteome</keyword>
<keyword id="KW-0732">Signal</keyword>
<keyword id="KW-0812">Transmembrane</keyword>
<keyword id="KW-1133">Transmembrane helix</keyword>
<reference key="1">
    <citation type="journal article" date="2005" name="Nature">
        <title>The genome of the social amoeba Dictyostelium discoideum.</title>
        <authorList>
            <person name="Eichinger L."/>
            <person name="Pachebat J.A."/>
            <person name="Gloeckner G."/>
            <person name="Rajandream M.A."/>
            <person name="Sucgang R."/>
            <person name="Berriman M."/>
            <person name="Song J."/>
            <person name="Olsen R."/>
            <person name="Szafranski K."/>
            <person name="Xu Q."/>
            <person name="Tunggal B."/>
            <person name="Kummerfeld S."/>
            <person name="Madera M."/>
            <person name="Konfortov B.A."/>
            <person name="Rivero F."/>
            <person name="Bankier A.T."/>
            <person name="Lehmann R."/>
            <person name="Hamlin N."/>
            <person name="Davies R."/>
            <person name="Gaudet P."/>
            <person name="Fey P."/>
            <person name="Pilcher K."/>
            <person name="Chen G."/>
            <person name="Saunders D."/>
            <person name="Sodergren E.J."/>
            <person name="Davis P."/>
            <person name="Kerhornou A."/>
            <person name="Nie X."/>
            <person name="Hall N."/>
            <person name="Anjard C."/>
            <person name="Hemphill L."/>
            <person name="Bason N."/>
            <person name="Farbrother P."/>
            <person name="Desany B."/>
            <person name="Just E."/>
            <person name="Morio T."/>
            <person name="Rost R."/>
            <person name="Churcher C.M."/>
            <person name="Cooper J."/>
            <person name="Haydock S."/>
            <person name="van Driessche N."/>
            <person name="Cronin A."/>
            <person name="Goodhead I."/>
            <person name="Muzny D.M."/>
            <person name="Mourier T."/>
            <person name="Pain A."/>
            <person name="Lu M."/>
            <person name="Harper D."/>
            <person name="Lindsay R."/>
            <person name="Hauser H."/>
            <person name="James K.D."/>
            <person name="Quiles M."/>
            <person name="Madan Babu M."/>
            <person name="Saito T."/>
            <person name="Buchrieser C."/>
            <person name="Wardroper A."/>
            <person name="Felder M."/>
            <person name="Thangavelu M."/>
            <person name="Johnson D."/>
            <person name="Knights A."/>
            <person name="Loulseged H."/>
            <person name="Mungall K.L."/>
            <person name="Oliver K."/>
            <person name="Price C."/>
            <person name="Quail M.A."/>
            <person name="Urushihara H."/>
            <person name="Hernandez J."/>
            <person name="Rabbinowitsch E."/>
            <person name="Steffen D."/>
            <person name="Sanders M."/>
            <person name="Ma J."/>
            <person name="Kohara Y."/>
            <person name="Sharp S."/>
            <person name="Simmonds M.N."/>
            <person name="Spiegler S."/>
            <person name="Tivey A."/>
            <person name="Sugano S."/>
            <person name="White B."/>
            <person name="Walker D."/>
            <person name="Woodward J.R."/>
            <person name="Winckler T."/>
            <person name="Tanaka Y."/>
            <person name="Shaulsky G."/>
            <person name="Schleicher M."/>
            <person name="Weinstock G.M."/>
            <person name="Rosenthal A."/>
            <person name="Cox E.C."/>
            <person name="Chisholm R.L."/>
            <person name="Gibbs R.A."/>
            <person name="Loomis W.F."/>
            <person name="Platzer M."/>
            <person name="Kay R.R."/>
            <person name="Williams J.G."/>
            <person name="Dear P.H."/>
            <person name="Noegel A.A."/>
            <person name="Barrell B.G."/>
            <person name="Kuspa A."/>
        </authorList>
    </citation>
    <scope>NUCLEOTIDE SEQUENCE [LARGE SCALE GENOMIC DNA]</scope>
    <source>
        <strain>AX4</strain>
    </source>
</reference>
<proteinExistence type="inferred from homology"/>
<evidence type="ECO:0000255" key="1"/>
<evidence type="ECO:0000255" key="2">
    <source>
        <dbReference type="PROSITE-ProRule" id="PRU00817"/>
    </source>
</evidence>
<evidence type="ECO:0000256" key="3">
    <source>
        <dbReference type="SAM" id="MobiDB-lite"/>
    </source>
</evidence>
<evidence type="ECO:0000305" key="4"/>
<sequence>MKRFFIVILFILLVCIFNVKSEEQLGEIEISKNSFSIDTNAINAEINYVIDNSITKPKLIVTLLSGDVNSIEDITSISKDKSTLTFGDFSSLSLGNKQSNNNNRIVLMIATITGSLLFIRFNIGFNKSTTLIILIIGTIFLIGSSHSITLSEVSIRIDIKVPSTFKFEKLDLKLGSGSSNIIGLSSNSINIDSCLNLKDHKINLSDTTITSALNICSTKNIDIKNLKQSSNSLINLKTNSNITLNFGNGYSGLLDIYSNSLKIDEACDIKVDGLNTTGSCNEGTSSKLVINANGVTITGTTPTTTPTTTPTTTPTTTPTTTPTTTPTTTPTTTPTTTPTTTPTTTPTTTPTTTPTTTPTITPTTTPTTTPTTTPTDSCPTTSTWRPTMASSSSPSSPSFSSVTPILDFNFDKSNLGFRSRYKFNEKSISDGPNGIANSFSINFNETYSPDSNWLISKIPSPALRANVNYVFSFNFKLGQALSSDNTISSVTISFYSPIDLPDPNVLEYFDQPTASPLFTKTITTGSFSSSTTFQANSISIKPTTDIGLSLIAIQIIRTKQNSIPINLYFSEMKLSIPSKSIIDPTTFLTKDSELINIPKASASFDSQDPSTCPYLATDLVHWHDKSIWSSGIVPLPNASSNIILPAGKRVLISPCSISQTDIYKKITIPPTSELIFSDVNMTMHVQDIYVQGKFTMGTKECRYNAYINLIFHGTKTTSDTIATNFGSKGIAVASGGFISVQGKQYHNTWSKLSTTAWSGDSTIYIQDSVNWEVGQQVLITTSVYKDELYNQNEVLTIAAISGKKIQFTSALKYYHYGGQEYQAEVGLLSRRIVFQGDQSSSDPQQFGGHVLVSGEGQFSGLSLVRFGQKNIKGRYPLHYHLANNVQKSYISDCSVIDSYYRCYTIHGTNGVTLTRNVAFNAIGHCYYLEDGVEVDNTISYNLGAFVHTIGTPAAGYNQYGQDFLQSSDLTQPADSAAACYYITNAANSFIGNAASGGWSGFAFPNLPRPIGNHLSVSIVPSQFIAKVWEGNTAHSSGYYFEFGASIYVGGLLTYNDATGLLQYSSGRESRDTYLTGYNTSAAVWMRFNNTKVYLSNRGLSMWGERTEAVNLESHDSRRPASLFGEAWLSNAIVNGQSGNILSASVEYTRQGFQFYDTYVQTIISNIIFRNFIKYQNASSNEEDNRVIISMTHSSEFLPQGISVSKNITIQNTATSQFIGHNIPVNSTGSSRFFNFIDWDGSLTGKNVPTLIGSHEKFWQFDNTCSFNSDWNCYVCTKGTREIANVQFWVPGLISRDDAQNNDDSIGSISLFGDGITDRRSTRVIHTAGITGVSNSGWYLYLTDGTPTYMKIWLAQVIYNNYLFIAIPYPATTTFSVSSEYKYNSNYNFNFTQTSSASAVRSGDGKKYYFDGTHLFIKVINFRLNGTESFDRGGAKVYDVYWEFLIHITASNTIKPPVNGFFKGLTDTLPSSNL</sequence>
<feature type="signal peptide" evidence="1">
    <location>
        <begin position="1"/>
        <end position="21"/>
    </location>
</feature>
<feature type="chain" id="PRO_0000393591" description="G8 domain-containing protein DDB_G0286311">
    <location>
        <begin position="22"/>
        <end position="1473"/>
    </location>
</feature>
<feature type="transmembrane region" description="Helical" evidence="1">
    <location>
        <begin position="105"/>
        <end position="125"/>
    </location>
</feature>
<feature type="transmembrane region" description="Helical" evidence="1">
    <location>
        <begin position="130"/>
        <end position="150"/>
    </location>
</feature>
<feature type="domain" description="G8" evidence="2">
    <location>
        <begin position="626"/>
        <end position="754"/>
    </location>
</feature>
<feature type="region of interest" description="Disordered" evidence="3">
    <location>
        <begin position="298"/>
        <end position="400"/>
    </location>
</feature>
<feature type="compositionally biased region" description="Low complexity" evidence="3">
    <location>
        <begin position="298"/>
        <end position="375"/>
    </location>
</feature>
<feature type="compositionally biased region" description="Polar residues" evidence="3">
    <location>
        <begin position="376"/>
        <end position="389"/>
    </location>
</feature>
<feature type="compositionally biased region" description="Low complexity" evidence="3">
    <location>
        <begin position="390"/>
        <end position="400"/>
    </location>
</feature>
<feature type="glycosylation site" description="N-linked (GlcNAc...) asparagine" evidence="1">
    <location>
        <position position="126"/>
    </location>
</feature>
<feature type="glycosylation site" description="N-linked (GlcNAc...) asparagine" evidence="1">
    <location>
        <position position="203"/>
    </location>
</feature>
<feature type="glycosylation site" description="N-linked (GlcNAc...) asparagine" evidence="1">
    <location>
        <position position="241"/>
    </location>
</feature>
<feature type="glycosylation site" description="N-linked (GlcNAc...) asparagine" evidence="1">
    <location>
        <position position="275"/>
    </location>
</feature>
<feature type="glycosylation site" description="N-linked (GlcNAc...) asparagine" evidence="1">
    <location>
        <position position="444"/>
    </location>
</feature>
<feature type="glycosylation site" description="N-linked (GlcNAc...) asparagine" evidence="1">
    <location>
        <position position="637"/>
    </location>
</feature>
<feature type="glycosylation site" description="N-linked (GlcNAc...) asparagine" evidence="1">
    <location>
        <position position="680"/>
    </location>
</feature>
<feature type="glycosylation site" description="N-linked (GlcNAc...) asparagine" evidence="1">
    <location>
        <position position="1078"/>
    </location>
</feature>
<feature type="glycosylation site" description="N-linked (GlcNAc...) asparagine" evidence="1">
    <location>
        <position position="1088"/>
    </location>
</feature>
<feature type="glycosylation site" description="N-linked (GlcNAc...) asparagine" evidence="1">
    <location>
        <position position="1176"/>
    </location>
</feature>
<feature type="glycosylation site" description="N-linked (GlcNAc...) asparagine" evidence="1">
    <location>
        <position position="1206"/>
    </location>
</feature>
<feature type="glycosylation site" description="N-linked (GlcNAc...) asparagine" evidence="1">
    <location>
        <position position="1225"/>
    </location>
</feature>
<feature type="glycosylation site" description="N-linked (GlcNAc...) asparagine" evidence="1">
    <location>
        <position position="1389"/>
    </location>
</feature>
<feature type="glycosylation site" description="N-linked (GlcNAc...) asparagine" evidence="1">
    <location>
        <position position="1424"/>
    </location>
</feature>
<comment type="subcellular location">
    <subcellularLocation>
        <location evidence="4">Membrane</location>
        <topology evidence="4">Multi-pass membrane protein</topology>
    </subcellularLocation>
</comment>
<comment type="similarity">
    <text evidence="4">Belongs to the comF family.</text>
</comment>
<dbReference type="EMBL" id="AAFI02000085">
    <property type="protein sequence ID" value="EAL64331.1"/>
    <property type="molecule type" value="Genomic_DNA"/>
</dbReference>
<dbReference type="RefSeq" id="XP_637850.1">
    <property type="nucleotide sequence ID" value="XM_632758.1"/>
</dbReference>
<dbReference type="SMR" id="Q54LY1"/>
<dbReference type="GlyGen" id="Q54LY1">
    <property type="glycosylation" value="14 sites"/>
</dbReference>
<dbReference type="PaxDb" id="44689-DDB0304436"/>
<dbReference type="EnsemblProtists" id="EAL64331">
    <property type="protein sequence ID" value="EAL64331"/>
    <property type="gene ID" value="DDB_G0286311"/>
</dbReference>
<dbReference type="GeneID" id="8625564"/>
<dbReference type="KEGG" id="ddi:DDB_G0286311"/>
<dbReference type="dictyBase" id="DDB_G0286311"/>
<dbReference type="VEuPathDB" id="AmoebaDB:DDB_G0286311"/>
<dbReference type="eggNOG" id="ENOG502QRDD">
    <property type="taxonomic scope" value="Eukaryota"/>
</dbReference>
<dbReference type="HOGENOM" id="CLU_005143_0_0_1"/>
<dbReference type="InParanoid" id="Q54LY1"/>
<dbReference type="OMA" id="NITIHIH"/>
<dbReference type="PhylomeDB" id="Q54LY1"/>
<dbReference type="PRO" id="PR:Q54LY1"/>
<dbReference type="Proteomes" id="UP000002195">
    <property type="component" value="Chromosome 4"/>
</dbReference>
<dbReference type="GO" id="GO:0016020">
    <property type="term" value="C:membrane"/>
    <property type="evidence" value="ECO:0007669"/>
    <property type="project" value="UniProtKB-SubCell"/>
</dbReference>
<dbReference type="InterPro" id="IPR055401">
    <property type="entry name" value="CEMIP_beta-hel_dom"/>
</dbReference>
<dbReference type="InterPro" id="IPR019316">
    <property type="entry name" value="G8_domain"/>
</dbReference>
<dbReference type="InterPro" id="IPR052334">
    <property type="entry name" value="G8_domain-comF-like"/>
</dbReference>
<dbReference type="PANTHER" id="PTHR47687:SF4">
    <property type="entry name" value="G8 DOMAIN-CONTAINING PROTEIN DDB_G0286311-RELATED"/>
    <property type="match status" value="1"/>
</dbReference>
<dbReference type="PANTHER" id="PTHR47687">
    <property type="entry name" value="G8 DOMAIN-CONTAINING PROTEIN DDB_G0288475-RELATED"/>
    <property type="match status" value="1"/>
</dbReference>
<dbReference type="Pfam" id="PF24606">
    <property type="entry name" value="CEMIP_beta-hel"/>
    <property type="match status" value="1"/>
</dbReference>
<dbReference type="Pfam" id="PF10162">
    <property type="entry name" value="G8"/>
    <property type="match status" value="1"/>
</dbReference>
<dbReference type="SMART" id="SM01225">
    <property type="entry name" value="G8"/>
    <property type="match status" value="1"/>
</dbReference>
<dbReference type="PROSITE" id="PS51484">
    <property type="entry name" value="G8"/>
    <property type="match status" value="1"/>
</dbReference>
<gene>
    <name type="ORF">DDB_G0286311</name>
</gene>
<protein>
    <recommendedName>
        <fullName>G8 domain-containing protein DDB_G0286311</fullName>
    </recommendedName>
</protein>
<name>Y6311_DICDI</name>
<organism>
    <name type="scientific">Dictyostelium discoideum</name>
    <name type="common">Social amoeba</name>
    <dbReference type="NCBI Taxonomy" id="44689"/>
    <lineage>
        <taxon>Eukaryota</taxon>
        <taxon>Amoebozoa</taxon>
        <taxon>Evosea</taxon>
        <taxon>Eumycetozoa</taxon>
        <taxon>Dictyostelia</taxon>
        <taxon>Dictyosteliales</taxon>
        <taxon>Dictyosteliaceae</taxon>
        <taxon>Dictyostelium</taxon>
    </lineage>
</organism>
<accession>Q54LY1</accession>